<sequence length="87" mass="9799">MKTKLNELLEFPTPFTYKVMGQALPELVDQVVEVVQRHAPGDYSPTVKPSSKGNYHSVSITINATHIEQVETLYEELGNIDIVRMVL</sequence>
<protein>
    <recommendedName>
        <fullName evidence="1">UPF0250 protein YbeD</fullName>
    </recommendedName>
</protein>
<dbReference type="EMBL" id="CP000026">
    <property type="protein sequence ID" value="AAV77992.1"/>
    <property type="molecule type" value="Genomic_DNA"/>
</dbReference>
<dbReference type="RefSeq" id="WP_000850547.1">
    <property type="nucleotide sequence ID" value="NC_006511.1"/>
</dbReference>
<dbReference type="SMR" id="Q5PMA0"/>
<dbReference type="GeneID" id="83645644"/>
<dbReference type="KEGG" id="spt:SPA2098"/>
<dbReference type="HOGENOM" id="CLU_161438_2_1_6"/>
<dbReference type="Proteomes" id="UP000008185">
    <property type="component" value="Chromosome"/>
</dbReference>
<dbReference type="GO" id="GO:0005829">
    <property type="term" value="C:cytosol"/>
    <property type="evidence" value="ECO:0007669"/>
    <property type="project" value="TreeGrafter"/>
</dbReference>
<dbReference type="FunFam" id="3.30.70.260:FF:000002">
    <property type="entry name" value="UPF0250 protein YbeD"/>
    <property type="match status" value="1"/>
</dbReference>
<dbReference type="Gene3D" id="3.30.70.260">
    <property type="match status" value="1"/>
</dbReference>
<dbReference type="HAMAP" id="MF_00659">
    <property type="entry name" value="UPF0250"/>
    <property type="match status" value="1"/>
</dbReference>
<dbReference type="InterPro" id="IPR007454">
    <property type="entry name" value="UPF0250_YbeD-like"/>
</dbReference>
<dbReference type="InterPro" id="IPR027471">
    <property type="entry name" value="YbeD-like_sf"/>
</dbReference>
<dbReference type="NCBIfam" id="NF003447">
    <property type="entry name" value="PRK04998.1"/>
    <property type="match status" value="1"/>
</dbReference>
<dbReference type="PANTHER" id="PTHR38036">
    <property type="entry name" value="UPF0250 PROTEIN YBED"/>
    <property type="match status" value="1"/>
</dbReference>
<dbReference type="PANTHER" id="PTHR38036:SF1">
    <property type="entry name" value="UPF0250 PROTEIN YBED"/>
    <property type="match status" value="1"/>
</dbReference>
<dbReference type="Pfam" id="PF04359">
    <property type="entry name" value="DUF493"/>
    <property type="match status" value="1"/>
</dbReference>
<dbReference type="SUPFAM" id="SSF117991">
    <property type="entry name" value="YbeD/HP0495-like"/>
    <property type="match status" value="1"/>
</dbReference>
<feature type="chain" id="PRO_1000061887" description="UPF0250 protein YbeD">
    <location>
        <begin position="1"/>
        <end position="87"/>
    </location>
</feature>
<reference key="1">
    <citation type="journal article" date="2004" name="Nat. Genet.">
        <title>Comparison of genome degradation in Paratyphi A and Typhi, human-restricted serovars of Salmonella enterica that cause typhoid.</title>
        <authorList>
            <person name="McClelland M."/>
            <person name="Sanderson K.E."/>
            <person name="Clifton S.W."/>
            <person name="Latreille P."/>
            <person name="Porwollik S."/>
            <person name="Sabo A."/>
            <person name="Meyer R."/>
            <person name="Bieri T."/>
            <person name="Ozersky P."/>
            <person name="McLellan M."/>
            <person name="Harkins C.R."/>
            <person name="Wang C."/>
            <person name="Nguyen C."/>
            <person name="Berghoff A."/>
            <person name="Elliott G."/>
            <person name="Kohlberg S."/>
            <person name="Strong C."/>
            <person name="Du F."/>
            <person name="Carter J."/>
            <person name="Kremizki C."/>
            <person name="Layman D."/>
            <person name="Leonard S."/>
            <person name="Sun H."/>
            <person name="Fulton L."/>
            <person name="Nash W."/>
            <person name="Miner T."/>
            <person name="Minx P."/>
            <person name="Delehaunty K."/>
            <person name="Fronick C."/>
            <person name="Magrini V."/>
            <person name="Nhan M."/>
            <person name="Warren W."/>
            <person name="Florea L."/>
            <person name="Spieth J."/>
            <person name="Wilson R.K."/>
        </authorList>
    </citation>
    <scope>NUCLEOTIDE SEQUENCE [LARGE SCALE GENOMIC DNA]</scope>
    <source>
        <strain>ATCC 9150 / SARB42</strain>
    </source>
</reference>
<proteinExistence type="inferred from homology"/>
<accession>Q5PMA0</accession>
<gene>
    <name evidence="1" type="primary">ybeD</name>
    <name type="ordered locus">SPA2098</name>
</gene>
<comment type="similarity">
    <text evidence="1">Belongs to the UPF0250 family.</text>
</comment>
<evidence type="ECO:0000255" key="1">
    <source>
        <dbReference type="HAMAP-Rule" id="MF_00659"/>
    </source>
</evidence>
<organism>
    <name type="scientific">Salmonella paratyphi A (strain ATCC 9150 / SARB42)</name>
    <dbReference type="NCBI Taxonomy" id="295319"/>
    <lineage>
        <taxon>Bacteria</taxon>
        <taxon>Pseudomonadati</taxon>
        <taxon>Pseudomonadota</taxon>
        <taxon>Gammaproteobacteria</taxon>
        <taxon>Enterobacterales</taxon>
        <taxon>Enterobacteriaceae</taxon>
        <taxon>Salmonella</taxon>
    </lineage>
</organism>
<name>YBED_SALPA</name>